<protein>
    <recommendedName>
        <fullName>Tyrosine-protein phosphatase non-receptor type 1</fullName>
        <ecNumber>3.1.3.48</ecNumber>
    </recommendedName>
    <alternativeName>
        <fullName>Protein-tyrosine phosphatase 1B</fullName>
        <shortName>PTP-1B</shortName>
    </alternativeName>
    <alternativeName>
        <fullName>Protein-tyrosine phosphatase HA2</fullName>
        <shortName>PTP-HA2</shortName>
    </alternativeName>
</protein>
<reference key="1">
    <citation type="journal article" date="1991" name="Blood">
        <title>Identification of novel protein tyrosine phosphatases of hematopoietic cells by polymerase chain reaction amplification.</title>
        <authorList>
            <person name="Yi T."/>
            <person name="Cleveland J.L."/>
            <person name="Ihle J.N."/>
        </authorList>
    </citation>
    <scope>NUCLEOTIDE SEQUENCE [MRNA]</scope>
</reference>
<reference key="2">
    <citation type="journal article" date="1992" name="Biochem. Biophys. Res. Commun.">
        <title>The cDNA cloning, nucleotide sequence and expression of an intracellular protein tyrosine phosphatase from mouse testis.</title>
        <authorList>
            <person name="Miyasaka H."/>
            <person name="Li S.S.L."/>
        </authorList>
    </citation>
    <scope>NUCLEOTIDE SEQUENCE [MRNA]</scope>
    <source>
        <tissue>Testis</tissue>
    </source>
</reference>
<reference key="3">
    <citation type="submission" date="1995-04" db="EMBL/GenBank/DDBJ databases">
        <authorList>
            <person name="Liao K."/>
            <person name="Lane M.D."/>
        </authorList>
    </citation>
    <scope>NUCLEOTIDE SEQUENCE [MRNA]</scope>
</reference>
<reference key="4">
    <citation type="submission" date="1996-05" db="EMBL/GenBank/DDBJ databases">
        <authorList>
            <person name="Park K."/>
            <person name="Byun S."/>
        </authorList>
    </citation>
    <scope>NUCLEOTIDE SEQUENCE [MRNA]</scope>
    <source>
        <tissue>Brain</tissue>
    </source>
</reference>
<reference key="5">
    <citation type="journal article" date="1995" name="Biochem. J.">
        <title>A novel receptor-type protein tyrosine phosphatase with a single catalytic domain is specifically expressed in mouse brain.</title>
        <authorList>
            <person name="Hendriks W."/>
            <person name="Schepens J."/>
            <person name="Brugman C."/>
            <person name="Zeeuwen P."/>
            <person name="Wieringa B."/>
        </authorList>
    </citation>
    <scope>NUCLEOTIDE SEQUENCE [MRNA] OF 102-213</scope>
    <source>
        <strain>BALB/cJ</strain>
        <tissue>Brain</tissue>
    </source>
</reference>
<reference key="6">
    <citation type="journal article" date="2004" name="Genome Res.">
        <title>The status, quality, and expansion of the NIH full-length cDNA project: the Mammalian Gene Collection (MGC).</title>
        <authorList>
            <consortium name="The MGC Project Team"/>
        </authorList>
    </citation>
    <scope>NUCLEOTIDE SEQUENCE [LARGE SCALE MRNA]</scope>
</reference>
<reference key="7">
    <citation type="journal article" date="2007" name="Proc. Natl. Acad. Sci. U.S.A.">
        <title>Large-scale phosphorylation analysis of mouse liver.</title>
        <authorList>
            <person name="Villen J."/>
            <person name="Beausoleil S.A."/>
            <person name="Gerber S.A."/>
            <person name="Gygi S.P."/>
        </authorList>
    </citation>
    <scope>IDENTIFICATION BY MASS SPECTROMETRY [LARGE SCALE ANALYSIS]</scope>
    <source>
        <tissue>Liver</tissue>
    </source>
</reference>
<reference key="8">
    <citation type="journal article" date="2010" name="Cell">
        <title>A tissue-specific atlas of mouse protein phosphorylation and expression.</title>
        <authorList>
            <person name="Huttlin E.L."/>
            <person name="Jedrychowski M.P."/>
            <person name="Elias J.E."/>
            <person name="Goswami T."/>
            <person name="Rad R."/>
            <person name="Beausoleil S.A."/>
            <person name="Villen J."/>
            <person name="Haas W."/>
            <person name="Sowa M.E."/>
            <person name="Gygi S.P."/>
        </authorList>
    </citation>
    <scope>PHOSPHORYLATION [LARGE SCALE ANALYSIS] AT SER-335</scope>
    <scope>IDENTIFICATION BY MASS SPECTROMETRY [LARGE SCALE ANALYSIS]</scope>
    <source>
        <tissue>Brain</tissue>
        <tissue>Brown adipose tissue</tissue>
        <tissue>Heart</tissue>
        <tissue>Lung</tissue>
        <tissue>Spleen</tissue>
        <tissue>Testis</tissue>
    </source>
</reference>
<comment type="function">
    <text evidence="1">Tyrosine-protein phosphatase which acts as a regulator of endoplasmic reticulum unfolded protein response. Mediates dephosphorylation of EIF2AK3/PERK; inactivating the protein kinase activity of EIF2AK3/PERK. May play an important role in CKII- and p60c-src-induced signal transduction cascades. May regulate the EFNA5-EPHA3 signaling pathway which modulates cell reorganization and cell-cell repulsion. May also regulate the hepatocyte growth factor receptor signaling pathway through dephosphorylation of MET (By similarity).</text>
</comment>
<comment type="catalytic activity">
    <reaction evidence="4">
        <text>O-phospho-L-tyrosyl-[protein] + H2O = L-tyrosyl-[protein] + phosphate</text>
        <dbReference type="Rhea" id="RHEA:10684"/>
        <dbReference type="Rhea" id="RHEA-COMP:10136"/>
        <dbReference type="Rhea" id="RHEA-COMP:20101"/>
        <dbReference type="ChEBI" id="CHEBI:15377"/>
        <dbReference type="ChEBI" id="CHEBI:43474"/>
        <dbReference type="ChEBI" id="CHEBI:46858"/>
        <dbReference type="ChEBI" id="CHEBI:61978"/>
        <dbReference type="EC" id="3.1.3.48"/>
    </reaction>
</comment>
<comment type="subunit">
    <text evidence="2">Interacts with EPHA3 (phosphorylated); dephosphorylates EPHA3 and may regulate its trafficking and function. Interacts with MET. Interacts with NCK1.</text>
</comment>
<comment type="subcellular location">
    <subcellularLocation>
        <location evidence="1">Endoplasmic reticulum membrane</location>
        <topology evidence="1">Peripheral membrane protein</topology>
        <orientation evidence="1">Cytoplasmic side</orientation>
    </subcellularLocation>
    <text evidence="1">Interacts with EPHA3 at the cell membrane.</text>
</comment>
<comment type="tissue specificity">
    <text>Most abundant in testis. Also found in kidney, spleen, muscle, liver, heart and brain.</text>
</comment>
<comment type="PTM">
    <text evidence="1">Ser-50 is the major site of phosphorylation as compared to Ser-242 and Ser-243. Activated by phosphorylation at Ser-50 (By similarity).</text>
</comment>
<comment type="PTM">
    <text evidence="1">S-nitrosylation of Cys-215 inactivates the enzyme activity.</text>
</comment>
<comment type="PTM">
    <text evidence="1">Sulfhydration at Cys-215 following endoplasmic reticulum stress inactivates the enzyme activity, promoting EIF2AK3/PERK activity.</text>
</comment>
<comment type="similarity">
    <text evidence="6">Belongs to the protein-tyrosine phosphatase family. Non-receptor class 1 subfamily.</text>
</comment>
<organism>
    <name type="scientific">Mus musculus</name>
    <name type="common">Mouse</name>
    <dbReference type="NCBI Taxonomy" id="10090"/>
    <lineage>
        <taxon>Eukaryota</taxon>
        <taxon>Metazoa</taxon>
        <taxon>Chordata</taxon>
        <taxon>Craniata</taxon>
        <taxon>Vertebrata</taxon>
        <taxon>Euteleostomi</taxon>
        <taxon>Mammalia</taxon>
        <taxon>Eutheria</taxon>
        <taxon>Euarchontoglires</taxon>
        <taxon>Glires</taxon>
        <taxon>Rodentia</taxon>
        <taxon>Myomorpha</taxon>
        <taxon>Muroidea</taxon>
        <taxon>Muridae</taxon>
        <taxon>Murinae</taxon>
        <taxon>Mus</taxon>
        <taxon>Mus</taxon>
    </lineage>
</organism>
<sequence length="432" mass="49593">MEMEKEFEEIDKAGNWAAIYQDIRHEASDFPCKVAKLPKNKNRNRYRDVSPFDHSRIKLHQEDNDYINASLIKMEEAQRSYILTQGPLPNTCGHFWEMVWEQKSRGVVMLNRIMEKGSLKCAQYWPQQEEKEMVFDDTGLKLTLISEDVKSYYTVRQLELENLTTKETREILHFHYTTWPDFGVPESPASFLNFLFKVRESGSLSLEHGPIVVHCSAGIGRSGTFCLADTCLLLMDKRKDPSSVDIKKVLLEMRRFRMGLIQTADQLRFSYLAVIEGAKFIMGDSSVQDQWKELSREDLDLPPEHVPPPPRPPKRTLEPHNGKCKELFSSHQWVSEETCGDEDSLAREEGRAQSSAMHSVSSMSPDTEVRRRMVGGGLQSAQASVPTEEELSSTEEEHKAHWPSHWKPFLVNVCMATLLATGAYLCYRVCFH</sequence>
<name>PTN1_MOUSE</name>
<evidence type="ECO:0000250" key="1"/>
<evidence type="ECO:0000250" key="2">
    <source>
        <dbReference type="UniProtKB" id="P18031"/>
    </source>
</evidence>
<evidence type="ECO:0000255" key="3">
    <source>
        <dbReference type="PROSITE-ProRule" id="PRU00160"/>
    </source>
</evidence>
<evidence type="ECO:0000255" key="4">
    <source>
        <dbReference type="PROSITE-ProRule" id="PRU10044"/>
    </source>
</evidence>
<evidence type="ECO:0000256" key="5">
    <source>
        <dbReference type="SAM" id="MobiDB-lite"/>
    </source>
</evidence>
<evidence type="ECO:0000305" key="6"/>
<evidence type="ECO:0007744" key="7">
    <source>
    </source>
</evidence>
<gene>
    <name type="primary">Ptpn1</name>
</gene>
<dbReference type="EC" id="3.1.3.48"/>
<dbReference type="EMBL" id="M97590">
    <property type="status" value="NOT_ANNOTATED_CDS"/>
    <property type="molecule type" value="mRNA"/>
</dbReference>
<dbReference type="EMBL" id="L40595">
    <property type="protein sequence ID" value="AAA64615.1"/>
    <property type="molecule type" value="mRNA"/>
</dbReference>
<dbReference type="EMBL" id="U24700">
    <property type="protein sequence ID" value="AAA98605.1"/>
    <property type="molecule type" value="mRNA"/>
</dbReference>
<dbReference type="EMBL" id="Z23057">
    <property type="protein sequence ID" value="CAA80592.1"/>
    <property type="molecule type" value="mRNA"/>
</dbReference>
<dbReference type="EMBL" id="BC005729">
    <property type="protein sequence ID" value="AAH05729.1"/>
    <property type="molecule type" value="mRNA"/>
</dbReference>
<dbReference type="EMBL" id="BC010191">
    <property type="protein sequence ID" value="AAH10191.1"/>
    <property type="molecule type" value="mRNA"/>
</dbReference>
<dbReference type="CCDS" id="CCDS17107.1"/>
<dbReference type="PIR" id="JN0317">
    <property type="entry name" value="JN0317"/>
</dbReference>
<dbReference type="RefSeq" id="NP_035331.3">
    <property type="nucleotide sequence ID" value="NM_011201.3"/>
</dbReference>
<dbReference type="SMR" id="P35821"/>
<dbReference type="BioGRID" id="202476">
    <property type="interactions" value="6"/>
</dbReference>
<dbReference type="FunCoup" id="P35821">
    <property type="interactions" value="3289"/>
</dbReference>
<dbReference type="STRING" id="10090.ENSMUSP00000029053"/>
<dbReference type="ChEMBL" id="CHEMBL3336"/>
<dbReference type="GlyGen" id="P35821">
    <property type="glycosylation" value="1 site, 1 O-linked glycan (1 site)"/>
</dbReference>
<dbReference type="iPTMnet" id="P35821"/>
<dbReference type="PhosphoSitePlus" id="P35821"/>
<dbReference type="SwissPalm" id="P35821"/>
<dbReference type="jPOST" id="P35821"/>
<dbReference type="PaxDb" id="10090-ENSMUSP00000029053"/>
<dbReference type="PeptideAtlas" id="P35821"/>
<dbReference type="ProteomicsDB" id="291629"/>
<dbReference type="Pumba" id="P35821"/>
<dbReference type="Antibodypedia" id="2724">
    <property type="antibodies" value="808 antibodies from 43 providers"/>
</dbReference>
<dbReference type="DNASU" id="19246"/>
<dbReference type="Ensembl" id="ENSMUST00000029053.8">
    <property type="protein sequence ID" value="ENSMUSP00000029053.8"/>
    <property type="gene ID" value="ENSMUSG00000027540.14"/>
</dbReference>
<dbReference type="GeneID" id="19246"/>
<dbReference type="KEGG" id="mmu:19246"/>
<dbReference type="UCSC" id="uc008oaj.1">
    <property type="organism name" value="mouse"/>
</dbReference>
<dbReference type="AGR" id="MGI:97805"/>
<dbReference type="CTD" id="5770"/>
<dbReference type="MGI" id="MGI:97805">
    <property type="gene designation" value="Ptpn1"/>
</dbReference>
<dbReference type="VEuPathDB" id="HostDB:ENSMUSG00000027540"/>
<dbReference type="eggNOG" id="KOG0789">
    <property type="taxonomic scope" value="Eukaryota"/>
</dbReference>
<dbReference type="GeneTree" id="ENSGT00940000158041"/>
<dbReference type="HOGENOM" id="CLU_001645_9_0_1"/>
<dbReference type="InParanoid" id="P35821"/>
<dbReference type="OMA" id="EFWEIDE"/>
<dbReference type="OrthoDB" id="9450131at2759"/>
<dbReference type="PhylomeDB" id="P35821"/>
<dbReference type="TreeFam" id="TF315897"/>
<dbReference type="BRENDA" id="3.1.3.48">
    <property type="organism ID" value="3474"/>
</dbReference>
<dbReference type="Reactome" id="R-MMU-354192">
    <property type="pathway name" value="Integrin signaling"/>
</dbReference>
<dbReference type="Reactome" id="R-MMU-6807004">
    <property type="pathway name" value="Negative regulation of MET activity"/>
</dbReference>
<dbReference type="Reactome" id="R-MMU-77387">
    <property type="pathway name" value="Insulin receptor recycling"/>
</dbReference>
<dbReference type="Reactome" id="R-MMU-8849472">
    <property type="pathway name" value="PTK6 Down-Regulation"/>
</dbReference>
<dbReference type="Reactome" id="R-MMU-912694">
    <property type="pathway name" value="Regulation of IFNA/IFNB signaling"/>
</dbReference>
<dbReference type="Reactome" id="R-MMU-982772">
    <property type="pathway name" value="Growth hormone receptor signaling"/>
</dbReference>
<dbReference type="Reactome" id="R-MMU-9860927">
    <property type="pathway name" value="Turbulent (oscillatory, disturbed) flow shear stress activates signaling by PIEZO1 and integrins in endothelial cells"/>
</dbReference>
<dbReference type="BioGRID-ORCS" id="19246">
    <property type="hits" value="9 hits in 79 CRISPR screens"/>
</dbReference>
<dbReference type="ChiTaRS" id="Ptpn1">
    <property type="organism name" value="mouse"/>
</dbReference>
<dbReference type="PRO" id="PR:P35821"/>
<dbReference type="Proteomes" id="UP000000589">
    <property type="component" value="Chromosome 2"/>
</dbReference>
<dbReference type="RNAct" id="P35821">
    <property type="molecule type" value="protein"/>
</dbReference>
<dbReference type="Bgee" id="ENSMUSG00000027540">
    <property type="expression patterns" value="Expressed in femorotibial joint and 264 other cell types or tissues"/>
</dbReference>
<dbReference type="ExpressionAtlas" id="P35821">
    <property type="expression patterns" value="baseline and differential"/>
</dbReference>
<dbReference type="GO" id="GO:0005737">
    <property type="term" value="C:cytoplasm"/>
    <property type="evidence" value="ECO:0000314"/>
    <property type="project" value="ParkinsonsUK-UCL"/>
</dbReference>
<dbReference type="GO" id="GO:0098554">
    <property type="term" value="C:cytoplasmic side of endoplasmic reticulum membrane"/>
    <property type="evidence" value="ECO:0007669"/>
    <property type="project" value="Ensembl"/>
</dbReference>
<dbReference type="GO" id="GO:0005829">
    <property type="term" value="C:cytosol"/>
    <property type="evidence" value="ECO:0000304"/>
    <property type="project" value="Reactome"/>
</dbReference>
<dbReference type="GO" id="GO:0005769">
    <property type="term" value="C:early endosome"/>
    <property type="evidence" value="ECO:0000314"/>
    <property type="project" value="BHF-UCL"/>
</dbReference>
<dbReference type="GO" id="GO:0005783">
    <property type="term" value="C:endoplasmic reticulum"/>
    <property type="evidence" value="ECO:0000303"/>
    <property type="project" value="ParkinsonsUK-UCL"/>
</dbReference>
<dbReference type="GO" id="GO:0031904">
    <property type="term" value="C:endosome lumen"/>
    <property type="evidence" value="ECO:0000314"/>
    <property type="project" value="MGI"/>
</dbReference>
<dbReference type="GO" id="GO:0098978">
    <property type="term" value="C:glutamatergic synapse"/>
    <property type="evidence" value="ECO:0007669"/>
    <property type="project" value="Ensembl"/>
</dbReference>
<dbReference type="GO" id="GO:0030061">
    <property type="term" value="C:mitochondrial crista"/>
    <property type="evidence" value="ECO:0007669"/>
    <property type="project" value="Ensembl"/>
</dbReference>
<dbReference type="GO" id="GO:0005759">
    <property type="term" value="C:mitochondrial matrix"/>
    <property type="evidence" value="ECO:0007669"/>
    <property type="project" value="Ensembl"/>
</dbReference>
<dbReference type="GO" id="GO:0005886">
    <property type="term" value="C:plasma membrane"/>
    <property type="evidence" value="ECO:0007669"/>
    <property type="project" value="Ensembl"/>
</dbReference>
<dbReference type="GO" id="GO:0098794">
    <property type="term" value="C:postsynapse"/>
    <property type="evidence" value="ECO:0007669"/>
    <property type="project" value="Ensembl"/>
</dbReference>
<dbReference type="GO" id="GO:0032991">
    <property type="term" value="C:protein-containing complex"/>
    <property type="evidence" value="ECO:0000266"/>
    <property type="project" value="MGI"/>
</dbReference>
<dbReference type="GO" id="GO:0097443">
    <property type="term" value="C:sorting endosome"/>
    <property type="evidence" value="ECO:0000314"/>
    <property type="project" value="BHF-UCL"/>
</dbReference>
<dbReference type="GO" id="GO:0046875">
    <property type="term" value="F:ephrin receptor binding"/>
    <property type="evidence" value="ECO:0007669"/>
    <property type="project" value="Ensembl"/>
</dbReference>
<dbReference type="GO" id="GO:0005158">
    <property type="term" value="F:insulin receptor binding"/>
    <property type="evidence" value="ECO:0007669"/>
    <property type="project" value="Ensembl"/>
</dbReference>
<dbReference type="GO" id="GO:0051721">
    <property type="term" value="F:protein phosphatase 2A binding"/>
    <property type="evidence" value="ECO:0007669"/>
    <property type="project" value="Ensembl"/>
</dbReference>
<dbReference type="GO" id="GO:0004725">
    <property type="term" value="F:protein tyrosine phosphatase activity"/>
    <property type="evidence" value="ECO:0000314"/>
    <property type="project" value="MGI"/>
</dbReference>
<dbReference type="GO" id="GO:0030971">
    <property type="term" value="F:receptor tyrosine kinase binding"/>
    <property type="evidence" value="ECO:0007669"/>
    <property type="project" value="Ensembl"/>
</dbReference>
<dbReference type="GO" id="GO:0008270">
    <property type="term" value="F:zinc ion binding"/>
    <property type="evidence" value="ECO:0007669"/>
    <property type="project" value="Ensembl"/>
</dbReference>
<dbReference type="GO" id="GO:0030036">
    <property type="term" value="P:actin cytoskeleton organization"/>
    <property type="evidence" value="ECO:0000250"/>
    <property type="project" value="UniProtKB"/>
</dbReference>
<dbReference type="GO" id="GO:1904385">
    <property type="term" value="P:cellular response to angiotensin"/>
    <property type="evidence" value="ECO:0007669"/>
    <property type="project" value="Ensembl"/>
</dbReference>
<dbReference type="GO" id="GO:0044344">
    <property type="term" value="P:cellular response to fibroblast growth factor stimulus"/>
    <property type="evidence" value="ECO:0007669"/>
    <property type="project" value="Ensembl"/>
</dbReference>
<dbReference type="GO" id="GO:0071456">
    <property type="term" value="P:cellular response to hypoxia"/>
    <property type="evidence" value="ECO:0007669"/>
    <property type="project" value="Ensembl"/>
</dbReference>
<dbReference type="GO" id="GO:1990090">
    <property type="term" value="P:cellular response to nerve growth factor stimulus"/>
    <property type="evidence" value="ECO:0007669"/>
    <property type="project" value="Ensembl"/>
</dbReference>
<dbReference type="GO" id="GO:0071732">
    <property type="term" value="P:cellular response to nitric oxide"/>
    <property type="evidence" value="ECO:0007669"/>
    <property type="project" value="Ensembl"/>
</dbReference>
<dbReference type="GO" id="GO:0036120">
    <property type="term" value="P:cellular response to platelet-derived growth factor stimulus"/>
    <property type="evidence" value="ECO:0007669"/>
    <property type="project" value="Ensembl"/>
</dbReference>
<dbReference type="GO" id="GO:0030968">
    <property type="term" value="P:endoplasmic reticulum unfolded protein response"/>
    <property type="evidence" value="ECO:0000250"/>
    <property type="project" value="UniProtKB"/>
</dbReference>
<dbReference type="GO" id="GO:0038020">
    <property type="term" value="P:insulin receptor recycling"/>
    <property type="evidence" value="ECO:0000315"/>
    <property type="project" value="MGI"/>
</dbReference>
<dbReference type="GO" id="GO:0008286">
    <property type="term" value="P:insulin receptor signaling pathway"/>
    <property type="evidence" value="ECO:0000315"/>
    <property type="project" value="MGI"/>
</dbReference>
<dbReference type="GO" id="GO:0036498">
    <property type="term" value="P:IRE1-mediated unfolded protein response"/>
    <property type="evidence" value="ECO:0000315"/>
    <property type="project" value="ParkinsonsUK-UCL"/>
</dbReference>
<dbReference type="GO" id="GO:0008285">
    <property type="term" value="P:negative regulation of cell population proliferation"/>
    <property type="evidence" value="ECO:0007669"/>
    <property type="project" value="Ensembl"/>
</dbReference>
<dbReference type="GO" id="GO:0010812">
    <property type="term" value="P:negative regulation of cell-substrate adhesion"/>
    <property type="evidence" value="ECO:0007669"/>
    <property type="project" value="Ensembl"/>
</dbReference>
<dbReference type="GO" id="GO:1902236">
    <property type="term" value="P:negative regulation of endoplasmic reticulum stress-induced intrinsic apoptotic signaling pathway"/>
    <property type="evidence" value="ECO:0000315"/>
    <property type="project" value="ParkinsonsUK-UCL"/>
</dbReference>
<dbReference type="GO" id="GO:0070373">
    <property type="term" value="P:negative regulation of ERK1 and ERK2 cascade"/>
    <property type="evidence" value="ECO:0000316"/>
    <property type="project" value="BHF-UCL"/>
</dbReference>
<dbReference type="GO" id="GO:0010977">
    <property type="term" value="P:negative regulation of neuron projection development"/>
    <property type="evidence" value="ECO:0007669"/>
    <property type="project" value="Ensembl"/>
</dbReference>
<dbReference type="GO" id="GO:1903898">
    <property type="term" value="P:negative regulation of PERK-mediated unfolded protein response"/>
    <property type="evidence" value="ECO:0000315"/>
    <property type="project" value="ParkinsonsUK-UCL"/>
</dbReference>
<dbReference type="GO" id="GO:0051898">
    <property type="term" value="P:negative regulation of phosphatidylinositol 3-kinase/protein kinase B signal transduction"/>
    <property type="evidence" value="ECO:0007669"/>
    <property type="project" value="Ensembl"/>
</dbReference>
<dbReference type="GO" id="GO:1904753">
    <property type="term" value="P:negative regulation of vascular associated smooth muscle cell migration"/>
    <property type="evidence" value="ECO:0007669"/>
    <property type="project" value="Ensembl"/>
</dbReference>
<dbReference type="GO" id="GO:0030948">
    <property type="term" value="P:negative regulation of vascular endothelial growth factor receptor signaling pathway"/>
    <property type="evidence" value="ECO:0000316"/>
    <property type="project" value="BHF-UCL"/>
</dbReference>
<dbReference type="GO" id="GO:0035335">
    <property type="term" value="P:peptidyl-tyrosine dephosphorylation"/>
    <property type="evidence" value="ECO:0000315"/>
    <property type="project" value="UniProtKB"/>
</dbReference>
<dbReference type="GO" id="GO:0035791">
    <property type="term" value="P:platelet-derived growth factor receptor-beta signaling pathway"/>
    <property type="evidence" value="ECO:0000315"/>
    <property type="project" value="UniProtKB"/>
</dbReference>
<dbReference type="GO" id="GO:0010666">
    <property type="term" value="P:positive regulation of cardiac muscle cell apoptotic process"/>
    <property type="evidence" value="ECO:0007669"/>
    <property type="project" value="Ensembl"/>
</dbReference>
<dbReference type="GO" id="GO:2000353">
    <property type="term" value="P:positive regulation of endothelial cell apoptotic process"/>
    <property type="evidence" value="ECO:0007669"/>
    <property type="project" value="Ensembl"/>
</dbReference>
<dbReference type="GO" id="GO:0010460">
    <property type="term" value="P:positive regulation of heart rate"/>
    <property type="evidence" value="ECO:0007669"/>
    <property type="project" value="Ensembl"/>
</dbReference>
<dbReference type="GO" id="GO:0043507">
    <property type="term" value="P:positive regulation of JUN kinase activity"/>
    <property type="evidence" value="ECO:0000315"/>
    <property type="project" value="ParkinsonsUK-UCL"/>
</dbReference>
<dbReference type="GO" id="GO:2000646">
    <property type="term" value="P:positive regulation of receptor catabolic process"/>
    <property type="evidence" value="ECO:0007669"/>
    <property type="project" value="Ensembl"/>
</dbReference>
<dbReference type="GO" id="GO:0003084">
    <property type="term" value="P:positive regulation of systemic arterial blood pressure"/>
    <property type="evidence" value="ECO:0007669"/>
    <property type="project" value="Ensembl"/>
</dbReference>
<dbReference type="GO" id="GO:0030100">
    <property type="term" value="P:regulation of endocytosis"/>
    <property type="evidence" value="ECO:0000250"/>
    <property type="project" value="UniProtKB"/>
</dbReference>
<dbReference type="GO" id="GO:1902202">
    <property type="term" value="P:regulation of hepatocyte growth factor receptor signaling pathway"/>
    <property type="evidence" value="ECO:0007669"/>
    <property type="project" value="Ensembl"/>
</dbReference>
<dbReference type="GO" id="GO:0033157">
    <property type="term" value="P:regulation of intracellular protein transport"/>
    <property type="evidence" value="ECO:0007669"/>
    <property type="project" value="Ensembl"/>
</dbReference>
<dbReference type="GO" id="GO:0150052">
    <property type="term" value="P:regulation of postsynapse assembly"/>
    <property type="evidence" value="ECO:0007669"/>
    <property type="project" value="Ensembl"/>
</dbReference>
<dbReference type="GO" id="GO:0030162">
    <property type="term" value="P:regulation of proteolysis"/>
    <property type="evidence" value="ECO:0007669"/>
    <property type="project" value="Ensembl"/>
</dbReference>
<dbReference type="GO" id="GO:0009966">
    <property type="term" value="P:regulation of signal transduction"/>
    <property type="evidence" value="ECO:0000250"/>
    <property type="project" value="UniProtKB"/>
</dbReference>
<dbReference type="GO" id="GO:0034976">
    <property type="term" value="P:response to endoplasmic reticulum stress"/>
    <property type="evidence" value="ECO:0000315"/>
    <property type="project" value="ParkinsonsUK-UCL"/>
</dbReference>
<dbReference type="GO" id="GO:0031667">
    <property type="term" value="P:response to nutrient levels"/>
    <property type="evidence" value="ECO:0007669"/>
    <property type="project" value="Ensembl"/>
</dbReference>
<dbReference type="CDD" id="cd14608">
    <property type="entry name" value="PTPc-N1"/>
    <property type="match status" value="1"/>
</dbReference>
<dbReference type="FunFam" id="3.90.190.10:FF:000025">
    <property type="entry name" value="Tyrosine-protein phosphatase non-receptor type 1"/>
    <property type="match status" value="1"/>
</dbReference>
<dbReference type="Gene3D" id="3.90.190.10">
    <property type="entry name" value="Protein tyrosine phosphatase superfamily"/>
    <property type="match status" value="1"/>
</dbReference>
<dbReference type="InterPro" id="IPR051985">
    <property type="entry name" value="NR_tyrosine_phosphatase"/>
</dbReference>
<dbReference type="InterPro" id="IPR029021">
    <property type="entry name" value="Prot-tyrosine_phosphatase-like"/>
</dbReference>
<dbReference type="InterPro" id="IPR000242">
    <property type="entry name" value="PTP_cat"/>
</dbReference>
<dbReference type="InterPro" id="IPR012265">
    <property type="entry name" value="Ptpn1/Ptpn2"/>
</dbReference>
<dbReference type="InterPro" id="IPR016130">
    <property type="entry name" value="Tyr_Pase_AS"/>
</dbReference>
<dbReference type="InterPro" id="IPR003595">
    <property type="entry name" value="Tyr_Pase_cat"/>
</dbReference>
<dbReference type="InterPro" id="IPR000387">
    <property type="entry name" value="Tyr_Pase_dom"/>
</dbReference>
<dbReference type="PANTHER" id="PTHR46047:SF2">
    <property type="entry name" value="TYROSINE-PROTEIN PHOSPHATASE NON-RECEPTOR TYPE 1"/>
    <property type="match status" value="1"/>
</dbReference>
<dbReference type="PANTHER" id="PTHR46047">
    <property type="entry name" value="TYROSINE-PROTEIN PHOSPHATASE NON-RECEPTOR TYPE 61F"/>
    <property type="match status" value="1"/>
</dbReference>
<dbReference type="Pfam" id="PF00102">
    <property type="entry name" value="Y_phosphatase"/>
    <property type="match status" value="1"/>
</dbReference>
<dbReference type="PIRSF" id="PIRSF000926">
    <property type="entry name" value="Tyr-Ptase_nr1"/>
    <property type="match status" value="1"/>
</dbReference>
<dbReference type="PRINTS" id="PR00700">
    <property type="entry name" value="PRTYPHPHTASE"/>
</dbReference>
<dbReference type="SMART" id="SM00194">
    <property type="entry name" value="PTPc"/>
    <property type="match status" value="1"/>
</dbReference>
<dbReference type="SMART" id="SM00404">
    <property type="entry name" value="PTPc_motif"/>
    <property type="match status" value="1"/>
</dbReference>
<dbReference type="SUPFAM" id="SSF52799">
    <property type="entry name" value="(Phosphotyrosine protein) phosphatases II"/>
    <property type="match status" value="1"/>
</dbReference>
<dbReference type="PROSITE" id="PS00383">
    <property type="entry name" value="TYR_PHOSPHATASE_1"/>
    <property type="match status" value="1"/>
</dbReference>
<dbReference type="PROSITE" id="PS50056">
    <property type="entry name" value="TYR_PHOSPHATASE_2"/>
    <property type="match status" value="1"/>
</dbReference>
<dbReference type="PROSITE" id="PS50055">
    <property type="entry name" value="TYR_PHOSPHATASE_PTP"/>
    <property type="match status" value="1"/>
</dbReference>
<accession>P35821</accession>
<accession>Q60840</accession>
<accession>Q62131</accession>
<accession>Q64498</accession>
<accession>Q99JS1</accession>
<proteinExistence type="evidence at protein level"/>
<feature type="chain" id="PRO_0000094749" description="Tyrosine-protein phosphatase non-receptor type 1">
    <location>
        <begin position="1"/>
        <end position="432"/>
    </location>
</feature>
<feature type="domain" description="Tyrosine-protein phosphatase" evidence="3">
    <location>
        <begin position="3"/>
        <end position="277"/>
    </location>
</feature>
<feature type="region of interest" description="Disordered" evidence="5">
    <location>
        <begin position="297"/>
        <end position="322"/>
    </location>
</feature>
<feature type="region of interest" description="Disordered" evidence="5">
    <location>
        <begin position="335"/>
        <end position="399"/>
    </location>
</feature>
<feature type="compositionally biased region" description="Low complexity" evidence="5">
    <location>
        <begin position="354"/>
        <end position="364"/>
    </location>
</feature>
<feature type="active site" description="Phosphocysteine intermediate" evidence="3 4">
    <location>
        <position position="215"/>
    </location>
</feature>
<feature type="binding site" evidence="1">
    <location>
        <position position="181"/>
    </location>
    <ligand>
        <name>substrate</name>
    </ligand>
</feature>
<feature type="binding site" evidence="1">
    <location>
        <begin position="215"/>
        <end position="221"/>
    </location>
    <ligand>
        <name>substrate</name>
    </ligand>
</feature>
<feature type="binding site" evidence="1">
    <location>
        <position position="262"/>
    </location>
    <ligand>
        <name>substrate</name>
    </ligand>
</feature>
<feature type="modified residue" description="N-acetylmethionine" evidence="2">
    <location>
        <position position="1"/>
    </location>
</feature>
<feature type="modified residue" description="Phosphotyrosine" evidence="2">
    <location>
        <position position="20"/>
    </location>
</feature>
<feature type="modified residue" description="Phosphoserine; by CLK1, CLK2 and PKB/AKT1 or PKB/AKT2" evidence="2">
    <location>
        <position position="50"/>
    </location>
</feature>
<feature type="modified residue" description="Phosphotyrosine; by EGFR" evidence="2">
    <location>
        <position position="66"/>
    </location>
</feature>
<feature type="modified residue" description="Cysteine persulfide" evidence="1">
    <location>
        <position position="215"/>
    </location>
</feature>
<feature type="modified residue" description="S-nitrosocysteine; in reversibly inhibited form" evidence="2">
    <location>
        <position position="215"/>
    </location>
</feature>
<feature type="modified residue" description="Phosphoserine; by CLK1 and CLK2" evidence="2">
    <location>
        <position position="242"/>
    </location>
</feature>
<feature type="modified residue" description="Phosphoserine; by CLK1 and CLK2" evidence="2">
    <location>
        <position position="243"/>
    </location>
</feature>
<feature type="modified residue" description="Phosphoserine" evidence="7">
    <location>
        <position position="335"/>
    </location>
</feature>
<feature type="modified residue" description="Phosphoserine" evidence="2">
    <location>
        <position position="362"/>
    </location>
</feature>
<feature type="modified residue" description="Phosphoserine" evidence="2">
    <location>
        <position position="364"/>
    </location>
</feature>
<feature type="modified residue" description="Phosphothreonine" evidence="2">
    <location>
        <position position="367"/>
    </location>
</feature>
<feature type="sequence conflict" description="In Ref. 2; M97590." evidence="6" ref="2">
    <original>D</original>
    <variation>Y</variation>
    <location>
        <position position="48"/>
    </location>
</feature>
<feature type="sequence conflict" description="In Ref. 3; AAA64615." evidence="6" ref="3">
    <original>H</original>
    <variation>P</variation>
    <location>
        <position position="173"/>
    </location>
</feature>
<feature type="sequence conflict" description="In Ref. 3; AAA64615." evidence="6" ref="3">
    <original>QL</original>
    <variation>HV</variation>
    <location>
        <begin position="266"/>
        <end position="267"/>
    </location>
</feature>
<keyword id="KW-0007">Acetylation</keyword>
<keyword id="KW-0256">Endoplasmic reticulum</keyword>
<keyword id="KW-0378">Hydrolase</keyword>
<keyword id="KW-0472">Membrane</keyword>
<keyword id="KW-0597">Phosphoprotein</keyword>
<keyword id="KW-0904">Protein phosphatase</keyword>
<keyword id="KW-1185">Reference proteome</keyword>
<keyword id="KW-0702">S-nitrosylation</keyword>